<sequence length="187" mass="20697">MNLQHHFLIAMPALQDPIFRRSVVYICEHNQDGAMGIIVNKPLENLQIEGILEKLKITPEPRDSSIRLDKAVMLGGPLAEDRGFILHTPPSRFASSIRISDNTVITTSRDVLETLGTQQQPSDVLVALGYASWDKGQLEQELLDNAWLTAPADLNILFKTPIAERWREAAKLIGIDILTMPGVAGHA</sequence>
<feature type="chain" id="PRO_1000198293" description="UPF0301 protein YqgE">
    <location>
        <begin position="1"/>
        <end position="187"/>
    </location>
</feature>
<comment type="similarity">
    <text evidence="1">Belongs to the UPF0301 (AlgH) family.</text>
</comment>
<proteinExistence type="inferred from homology"/>
<name>YQGE_SALEP</name>
<reference key="1">
    <citation type="journal article" date="2008" name="Genome Res.">
        <title>Comparative genome analysis of Salmonella enteritidis PT4 and Salmonella gallinarum 287/91 provides insights into evolutionary and host adaptation pathways.</title>
        <authorList>
            <person name="Thomson N.R."/>
            <person name="Clayton D.J."/>
            <person name="Windhorst D."/>
            <person name="Vernikos G."/>
            <person name="Davidson S."/>
            <person name="Churcher C."/>
            <person name="Quail M.A."/>
            <person name="Stevens M."/>
            <person name="Jones M.A."/>
            <person name="Watson M."/>
            <person name="Barron A."/>
            <person name="Layton A."/>
            <person name="Pickard D."/>
            <person name="Kingsley R.A."/>
            <person name="Bignell A."/>
            <person name="Clark L."/>
            <person name="Harris B."/>
            <person name="Ormond D."/>
            <person name="Abdellah Z."/>
            <person name="Brooks K."/>
            <person name="Cherevach I."/>
            <person name="Chillingworth T."/>
            <person name="Woodward J."/>
            <person name="Norberczak H."/>
            <person name="Lord A."/>
            <person name="Arrowsmith C."/>
            <person name="Jagels K."/>
            <person name="Moule S."/>
            <person name="Mungall K."/>
            <person name="Saunders M."/>
            <person name="Whitehead S."/>
            <person name="Chabalgoity J.A."/>
            <person name="Maskell D."/>
            <person name="Humphreys T."/>
            <person name="Roberts M."/>
            <person name="Barrow P.A."/>
            <person name="Dougan G."/>
            <person name="Parkhill J."/>
        </authorList>
    </citation>
    <scope>NUCLEOTIDE SEQUENCE [LARGE SCALE GENOMIC DNA]</scope>
    <source>
        <strain>P125109</strain>
    </source>
</reference>
<gene>
    <name evidence="1" type="primary">yqgE</name>
    <name type="ordered locus">SEN2939</name>
</gene>
<dbReference type="EMBL" id="AM933172">
    <property type="protein sequence ID" value="CAR34516.1"/>
    <property type="molecule type" value="Genomic_DNA"/>
</dbReference>
<dbReference type="RefSeq" id="WP_001053173.1">
    <property type="nucleotide sequence ID" value="NC_011294.1"/>
</dbReference>
<dbReference type="SMR" id="B5QY72"/>
<dbReference type="KEGG" id="set:SEN2939"/>
<dbReference type="HOGENOM" id="CLU_057596_1_0_6"/>
<dbReference type="Proteomes" id="UP000000613">
    <property type="component" value="Chromosome"/>
</dbReference>
<dbReference type="GO" id="GO:0005829">
    <property type="term" value="C:cytosol"/>
    <property type="evidence" value="ECO:0007669"/>
    <property type="project" value="TreeGrafter"/>
</dbReference>
<dbReference type="FunFam" id="3.30.70.1300:FF:000001">
    <property type="entry name" value="UPF0301 protein YqgE"/>
    <property type="match status" value="1"/>
</dbReference>
<dbReference type="Gene3D" id="3.40.1740.10">
    <property type="entry name" value="VC0467-like"/>
    <property type="match status" value="1"/>
</dbReference>
<dbReference type="Gene3D" id="3.30.70.1300">
    <property type="entry name" value="VC0467-like domains"/>
    <property type="match status" value="1"/>
</dbReference>
<dbReference type="HAMAP" id="MF_00758">
    <property type="entry name" value="UPF0301"/>
    <property type="match status" value="1"/>
</dbReference>
<dbReference type="InterPro" id="IPR003774">
    <property type="entry name" value="AlgH-like"/>
</dbReference>
<dbReference type="NCBIfam" id="NF001266">
    <property type="entry name" value="PRK00228.1-1"/>
    <property type="match status" value="1"/>
</dbReference>
<dbReference type="PANTHER" id="PTHR30327">
    <property type="entry name" value="UNCHARACTERIZED PROTEIN YQGE"/>
    <property type="match status" value="1"/>
</dbReference>
<dbReference type="PANTHER" id="PTHR30327:SF1">
    <property type="entry name" value="UPF0301 PROTEIN YQGE"/>
    <property type="match status" value="1"/>
</dbReference>
<dbReference type="Pfam" id="PF02622">
    <property type="entry name" value="DUF179"/>
    <property type="match status" value="1"/>
</dbReference>
<dbReference type="SUPFAM" id="SSF143456">
    <property type="entry name" value="VC0467-like"/>
    <property type="match status" value="1"/>
</dbReference>
<evidence type="ECO:0000255" key="1">
    <source>
        <dbReference type="HAMAP-Rule" id="MF_00758"/>
    </source>
</evidence>
<protein>
    <recommendedName>
        <fullName evidence="1">UPF0301 protein YqgE</fullName>
    </recommendedName>
</protein>
<organism>
    <name type="scientific">Salmonella enteritidis PT4 (strain P125109)</name>
    <dbReference type="NCBI Taxonomy" id="550537"/>
    <lineage>
        <taxon>Bacteria</taxon>
        <taxon>Pseudomonadati</taxon>
        <taxon>Pseudomonadota</taxon>
        <taxon>Gammaproteobacteria</taxon>
        <taxon>Enterobacterales</taxon>
        <taxon>Enterobacteriaceae</taxon>
        <taxon>Salmonella</taxon>
    </lineage>
</organism>
<accession>B5QY72</accession>